<proteinExistence type="inferred from homology"/>
<dbReference type="EC" id="2.4.2.10" evidence="1"/>
<dbReference type="EMBL" id="CP000023">
    <property type="protein sequence ID" value="AAV60630.1"/>
    <property type="molecule type" value="Genomic_DNA"/>
</dbReference>
<dbReference type="RefSeq" id="WP_002950692.1">
    <property type="nucleotide sequence ID" value="NC_006448.1"/>
</dbReference>
<dbReference type="SMR" id="Q5M4H9"/>
<dbReference type="STRING" id="264199.stu0968"/>
<dbReference type="GeneID" id="66898820"/>
<dbReference type="KEGG" id="stl:stu0968"/>
<dbReference type="PATRIC" id="fig|264199.4.peg.961"/>
<dbReference type="eggNOG" id="COG0461">
    <property type="taxonomic scope" value="Bacteria"/>
</dbReference>
<dbReference type="HOGENOM" id="CLU_074878_1_1_9"/>
<dbReference type="UniPathway" id="UPA00070">
    <property type="reaction ID" value="UER00119"/>
</dbReference>
<dbReference type="Proteomes" id="UP000001170">
    <property type="component" value="Chromosome"/>
</dbReference>
<dbReference type="GO" id="GO:0000287">
    <property type="term" value="F:magnesium ion binding"/>
    <property type="evidence" value="ECO:0007669"/>
    <property type="project" value="UniProtKB-UniRule"/>
</dbReference>
<dbReference type="GO" id="GO:0004588">
    <property type="term" value="F:orotate phosphoribosyltransferase activity"/>
    <property type="evidence" value="ECO:0007669"/>
    <property type="project" value="UniProtKB-UniRule"/>
</dbReference>
<dbReference type="GO" id="GO:0044205">
    <property type="term" value="P:'de novo' UMP biosynthetic process"/>
    <property type="evidence" value="ECO:0007669"/>
    <property type="project" value="UniProtKB-UniRule"/>
</dbReference>
<dbReference type="GO" id="GO:0019856">
    <property type="term" value="P:pyrimidine nucleobase biosynthetic process"/>
    <property type="evidence" value="ECO:0007669"/>
    <property type="project" value="TreeGrafter"/>
</dbReference>
<dbReference type="CDD" id="cd06223">
    <property type="entry name" value="PRTases_typeI"/>
    <property type="match status" value="1"/>
</dbReference>
<dbReference type="Gene3D" id="3.40.50.2020">
    <property type="match status" value="1"/>
</dbReference>
<dbReference type="HAMAP" id="MF_01208">
    <property type="entry name" value="PyrE"/>
    <property type="match status" value="1"/>
</dbReference>
<dbReference type="InterPro" id="IPR023031">
    <property type="entry name" value="OPRT"/>
</dbReference>
<dbReference type="InterPro" id="IPR004467">
    <property type="entry name" value="Or_phspho_trans_dom"/>
</dbReference>
<dbReference type="InterPro" id="IPR000836">
    <property type="entry name" value="PRibTrfase_dom"/>
</dbReference>
<dbReference type="InterPro" id="IPR029057">
    <property type="entry name" value="PRTase-like"/>
</dbReference>
<dbReference type="NCBIfam" id="TIGR00336">
    <property type="entry name" value="pyrE"/>
    <property type="match status" value="1"/>
</dbReference>
<dbReference type="PANTHER" id="PTHR19278">
    <property type="entry name" value="OROTATE PHOSPHORIBOSYLTRANSFERASE"/>
    <property type="match status" value="1"/>
</dbReference>
<dbReference type="PANTHER" id="PTHR19278:SF9">
    <property type="entry name" value="URIDINE 5'-MONOPHOSPHATE SYNTHASE"/>
    <property type="match status" value="1"/>
</dbReference>
<dbReference type="Pfam" id="PF00156">
    <property type="entry name" value="Pribosyltran"/>
    <property type="match status" value="1"/>
</dbReference>
<dbReference type="SUPFAM" id="SSF53271">
    <property type="entry name" value="PRTase-like"/>
    <property type="match status" value="1"/>
</dbReference>
<dbReference type="PROSITE" id="PS00103">
    <property type="entry name" value="PUR_PYR_PR_TRANSFER"/>
    <property type="match status" value="1"/>
</dbReference>
<accession>Q5M4H9</accession>
<feature type="chain" id="PRO_1000066315" description="Orotate phosphoribosyltransferase">
    <location>
        <begin position="1"/>
        <end position="209"/>
    </location>
</feature>
<feature type="binding site" evidence="1">
    <location>
        <position position="96"/>
    </location>
    <ligand>
        <name>5-phospho-alpha-D-ribose 1-diphosphate</name>
        <dbReference type="ChEBI" id="CHEBI:58017"/>
        <note>ligand shared between dimeric partners</note>
    </ligand>
</feature>
<feature type="binding site" evidence="1">
    <location>
        <position position="100"/>
    </location>
    <ligand>
        <name>5-phospho-alpha-D-ribose 1-diphosphate</name>
        <dbReference type="ChEBI" id="CHEBI:58017"/>
        <note>ligand shared between dimeric partners</note>
    </ligand>
</feature>
<feature type="binding site" evidence="1">
    <location>
        <position position="102"/>
    </location>
    <ligand>
        <name>5-phospho-alpha-D-ribose 1-diphosphate</name>
        <dbReference type="ChEBI" id="CHEBI:58017"/>
        <note>ligand shared between dimeric partners</note>
    </ligand>
</feature>
<feature type="binding site" description="in other chain" evidence="1">
    <location>
        <begin position="122"/>
        <end position="130"/>
    </location>
    <ligand>
        <name>5-phospho-alpha-D-ribose 1-diphosphate</name>
        <dbReference type="ChEBI" id="CHEBI:58017"/>
        <note>ligand shared between dimeric partners</note>
    </ligand>
</feature>
<feature type="binding site" evidence="1">
    <location>
        <position position="126"/>
    </location>
    <ligand>
        <name>orotate</name>
        <dbReference type="ChEBI" id="CHEBI:30839"/>
    </ligand>
</feature>
<organism>
    <name type="scientific">Streptococcus thermophilus (strain ATCC BAA-250 / LMG 18311)</name>
    <dbReference type="NCBI Taxonomy" id="264199"/>
    <lineage>
        <taxon>Bacteria</taxon>
        <taxon>Bacillati</taxon>
        <taxon>Bacillota</taxon>
        <taxon>Bacilli</taxon>
        <taxon>Lactobacillales</taxon>
        <taxon>Streptococcaceae</taxon>
        <taxon>Streptococcus</taxon>
    </lineage>
</organism>
<name>PYRE_STRT2</name>
<keyword id="KW-0328">Glycosyltransferase</keyword>
<keyword id="KW-0460">Magnesium</keyword>
<keyword id="KW-0665">Pyrimidine biosynthesis</keyword>
<keyword id="KW-1185">Reference proteome</keyword>
<keyword id="KW-0808">Transferase</keyword>
<evidence type="ECO:0000255" key="1">
    <source>
        <dbReference type="HAMAP-Rule" id="MF_01208"/>
    </source>
</evidence>
<sequence length="209" mass="22828">MTLASQIASDLLDIKAVYLKPEEPFTWASGIKSPIYTDNRITLSYPETRTLIENGFVKKIKEEFPEVEVIAGTATAGIPHGAIIADKMNLPFAYIRSKPKDHGAGNQIEGRVVKGEKMVVVEDLISTGGSVLDAVAAAEREGADVIGVVAIFTYELPKAEKNFAEAGVKLVTLSNYTELIKVAKVKGYITADGLRLLKKFKENQETWQD</sequence>
<protein>
    <recommendedName>
        <fullName evidence="1">Orotate phosphoribosyltransferase</fullName>
        <shortName evidence="1">OPRT</shortName>
        <shortName evidence="1">OPRTase</shortName>
        <ecNumber evidence="1">2.4.2.10</ecNumber>
    </recommendedName>
</protein>
<gene>
    <name evidence="1" type="primary">pyrE</name>
    <name type="ordered locus">stu0968</name>
</gene>
<comment type="function">
    <text evidence="1">Catalyzes the transfer of a ribosyl phosphate group from 5-phosphoribose 1-diphosphate to orotate, leading to the formation of orotidine monophosphate (OMP).</text>
</comment>
<comment type="catalytic activity">
    <reaction evidence="1">
        <text>orotidine 5'-phosphate + diphosphate = orotate + 5-phospho-alpha-D-ribose 1-diphosphate</text>
        <dbReference type="Rhea" id="RHEA:10380"/>
        <dbReference type="ChEBI" id="CHEBI:30839"/>
        <dbReference type="ChEBI" id="CHEBI:33019"/>
        <dbReference type="ChEBI" id="CHEBI:57538"/>
        <dbReference type="ChEBI" id="CHEBI:58017"/>
        <dbReference type="EC" id="2.4.2.10"/>
    </reaction>
</comment>
<comment type="cofactor">
    <cofactor evidence="1">
        <name>Mg(2+)</name>
        <dbReference type="ChEBI" id="CHEBI:18420"/>
    </cofactor>
</comment>
<comment type="pathway">
    <text evidence="1">Pyrimidine metabolism; UMP biosynthesis via de novo pathway; UMP from orotate: step 1/2.</text>
</comment>
<comment type="subunit">
    <text evidence="1">Homodimer.</text>
</comment>
<comment type="similarity">
    <text evidence="1">Belongs to the purine/pyrimidine phosphoribosyltransferase family. PyrE subfamily.</text>
</comment>
<reference key="1">
    <citation type="journal article" date="2004" name="Nat. Biotechnol.">
        <title>Complete sequence and comparative genome analysis of the dairy bacterium Streptococcus thermophilus.</title>
        <authorList>
            <person name="Bolotin A."/>
            <person name="Quinquis B."/>
            <person name="Renault P."/>
            <person name="Sorokin A."/>
            <person name="Ehrlich S.D."/>
            <person name="Kulakauskas S."/>
            <person name="Lapidus A."/>
            <person name="Goltsman E."/>
            <person name="Mazur M."/>
            <person name="Pusch G.D."/>
            <person name="Fonstein M."/>
            <person name="Overbeek R."/>
            <person name="Kyprides N."/>
            <person name="Purnelle B."/>
            <person name="Prozzi D."/>
            <person name="Ngui K."/>
            <person name="Masuy D."/>
            <person name="Hancy F."/>
            <person name="Burteau S."/>
            <person name="Boutry M."/>
            <person name="Delcour J."/>
            <person name="Goffeau A."/>
            <person name="Hols P."/>
        </authorList>
    </citation>
    <scope>NUCLEOTIDE SEQUENCE [LARGE SCALE GENOMIC DNA]</scope>
    <source>
        <strain>ATCC BAA-250 / LMG 18311</strain>
    </source>
</reference>